<name>RBD2_NEUCR</name>
<feature type="chain" id="PRO_0000206189" description="Rhomboid-type serine protease 2">
    <location>
        <begin position="1"/>
        <end position="276"/>
    </location>
</feature>
<feature type="transmembrane region" description="Helical" evidence="3">
    <location>
        <begin position="27"/>
        <end position="47"/>
    </location>
</feature>
<feature type="transmembrane region" description="Helical" evidence="3">
    <location>
        <begin position="77"/>
        <end position="97"/>
    </location>
</feature>
<feature type="transmembrane region" description="Helical" evidence="3">
    <location>
        <begin position="109"/>
        <end position="129"/>
    </location>
</feature>
<feature type="transmembrane region" description="Helical" evidence="3">
    <location>
        <begin position="132"/>
        <end position="152"/>
    </location>
</feature>
<feature type="transmembrane region" description="Helical" evidence="3">
    <location>
        <begin position="175"/>
        <end position="195"/>
    </location>
</feature>
<feature type="transmembrane region" description="Helical" evidence="3">
    <location>
        <begin position="198"/>
        <end position="218"/>
    </location>
</feature>
<feature type="active site" description="Nucleophile" evidence="2">
    <location>
        <position position="144"/>
    </location>
</feature>
<feature type="active site" evidence="2">
    <location>
        <position position="197"/>
    </location>
</feature>
<proteinExistence type="inferred from homology"/>
<protein>
    <recommendedName>
        <fullName evidence="4">Rhomboid-type serine protease 2</fullName>
        <ecNumber evidence="2">3.4.21.105</ecNumber>
    </recommendedName>
    <alternativeName>
        <fullName evidence="4">Rhomboid protein 2</fullName>
    </alternativeName>
</protein>
<dbReference type="EC" id="3.4.21.105" evidence="2"/>
<dbReference type="EMBL" id="CM002242">
    <property type="protein sequence ID" value="EAA30556.1"/>
    <property type="molecule type" value="Genomic_DNA"/>
</dbReference>
<dbReference type="RefSeq" id="XP_959792.1">
    <property type="nucleotide sequence ID" value="XM_954699.2"/>
</dbReference>
<dbReference type="FunCoup" id="Q7S4V5">
    <property type="interactions" value="61"/>
</dbReference>
<dbReference type="STRING" id="367110.Q7S4V5"/>
<dbReference type="PaxDb" id="5141-EFNCRP00000003228"/>
<dbReference type="EnsemblFungi" id="EAA30556">
    <property type="protein sequence ID" value="EAA30556"/>
    <property type="gene ID" value="NCU02371"/>
</dbReference>
<dbReference type="GeneID" id="3875946"/>
<dbReference type="KEGG" id="ncr:NCU02371"/>
<dbReference type="VEuPathDB" id="FungiDB:NCU02371"/>
<dbReference type="HOGENOM" id="CLU_084816_0_0_1"/>
<dbReference type="InParanoid" id="Q7S4V5"/>
<dbReference type="OMA" id="NTYPIVH"/>
<dbReference type="OrthoDB" id="10257275at2759"/>
<dbReference type="Proteomes" id="UP000001805">
    <property type="component" value="Chromosome 7, Linkage Group VII"/>
</dbReference>
<dbReference type="GO" id="GO:0000139">
    <property type="term" value="C:Golgi membrane"/>
    <property type="evidence" value="ECO:0007669"/>
    <property type="project" value="UniProtKB-SubCell"/>
</dbReference>
<dbReference type="GO" id="GO:0004252">
    <property type="term" value="F:serine-type endopeptidase activity"/>
    <property type="evidence" value="ECO:0000318"/>
    <property type="project" value="GO_Central"/>
</dbReference>
<dbReference type="GO" id="GO:0006508">
    <property type="term" value="P:proteolysis"/>
    <property type="evidence" value="ECO:0007669"/>
    <property type="project" value="UniProtKB-KW"/>
</dbReference>
<dbReference type="Gene3D" id="1.20.1540.10">
    <property type="entry name" value="Rhomboid-like"/>
    <property type="match status" value="1"/>
</dbReference>
<dbReference type="InterPro" id="IPR022764">
    <property type="entry name" value="Peptidase_S54_rhomboid_dom"/>
</dbReference>
<dbReference type="InterPro" id="IPR035952">
    <property type="entry name" value="Rhomboid-like_sf"/>
</dbReference>
<dbReference type="PANTHER" id="PTHR43066:SF1">
    <property type="entry name" value="RHOMBOID PROTEIN 2"/>
    <property type="match status" value="1"/>
</dbReference>
<dbReference type="PANTHER" id="PTHR43066">
    <property type="entry name" value="RHOMBOID-RELATED PROTEIN"/>
    <property type="match status" value="1"/>
</dbReference>
<dbReference type="Pfam" id="PF01694">
    <property type="entry name" value="Rhomboid"/>
    <property type="match status" value="1"/>
</dbReference>
<dbReference type="SUPFAM" id="SSF144091">
    <property type="entry name" value="Rhomboid-like"/>
    <property type="match status" value="1"/>
</dbReference>
<keyword id="KW-0333">Golgi apparatus</keyword>
<keyword id="KW-0378">Hydrolase</keyword>
<keyword id="KW-0472">Membrane</keyword>
<keyword id="KW-0645">Protease</keyword>
<keyword id="KW-1185">Reference proteome</keyword>
<keyword id="KW-0720">Serine protease</keyword>
<keyword id="KW-0812">Transmembrane</keyword>
<keyword id="KW-1133">Transmembrane helix</keyword>
<accession>Q7S4V5</accession>
<evidence type="ECO:0000250" key="1"/>
<evidence type="ECO:0000250" key="2">
    <source>
        <dbReference type="UniProtKB" id="O74926"/>
    </source>
</evidence>
<evidence type="ECO:0000255" key="3"/>
<evidence type="ECO:0000305" key="4"/>
<gene>
    <name type="primary">rbd-2</name>
    <name type="ORF">NCU02371</name>
</gene>
<sequence>MAAQTLPASGAAVTFNTQRTRAYLLKLPLFTRATVLIIVLTWVLTLVGKSWNWDVKTWGALIPDEIGIATLYRINTFPFIHLNIFHTILNIVAFTPLLERFEHEHGTLTSVALFFGPFATIPGLIYVFVERFILHANTPVMGASMWVFLLLGMEAIRTYKTNPYFTISTYNIPTWITPLLLVVVTAALLPSSSFLGHLAGLLVGYGFGLGYLKFLAPPEWALRFIEGKLNLLGRLPHYVSVDQKTFGRFGVLPSSASSAEAGIPFSGVSGGQRLGP</sequence>
<organism>
    <name type="scientific">Neurospora crassa (strain ATCC 24698 / 74-OR23-1A / CBS 708.71 / DSM 1257 / FGSC 987)</name>
    <dbReference type="NCBI Taxonomy" id="367110"/>
    <lineage>
        <taxon>Eukaryota</taxon>
        <taxon>Fungi</taxon>
        <taxon>Dikarya</taxon>
        <taxon>Ascomycota</taxon>
        <taxon>Pezizomycotina</taxon>
        <taxon>Sordariomycetes</taxon>
        <taxon>Sordariomycetidae</taxon>
        <taxon>Sordariales</taxon>
        <taxon>Sordariaceae</taxon>
        <taxon>Neurospora</taxon>
    </lineage>
</organism>
<reference key="1">
    <citation type="journal article" date="2003" name="Nature">
        <title>The genome sequence of the filamentous fungus Neurospora crassa.</title>
        <authorList>
            <person name="Galagan J.E."/>
            <person name="Calvo S.E."/>
            <person name="Borkovich K.A."/>
            <person name="Selker E.U."/>
            <person name="Read N.D."/>
            <person name="Jaffe D.B."/>
            <person name="FitzHugh W."/>
            <person name="Ma L.-J."/>
            <person name="Smirnov S."/>
            <person name="Purcell S."/>
            <person name="Rehman B."/>
            <person name="Elkins T."/>
            <person name="Engels R."/>
            <person name="Wang S."/>
            <person name="Nielsen C.B."/>
            <person name="Butler J."/>
            <person name="Endrizzi M."/>
            <person name="Qui D."/>
            <person name="Ianakiev P."/>
            <person name="Bell-Pedersen D."/>
            <person name="Nelson M.A."/>
            <person name="Werner-Washburne M."/>
            <person name="Selitrennikoff C.P."/>
            <person name="Kinsey J.A."/>
            <person name="Braun E.L."/>
            <person name="Zelter A."/>
            <person name="Schulte U."/>
            <person name="Kothe G.O."/>
            <person name="Jedd G."/>
            <person name="Mewes H.-W."/>
            <person name="Staben C."/>
            <person name="Marcotte E."/>
            <person name="Greenberg D."/>
            <person name="Roy A."/>
            <person name="Foley K."/>
            <person name="Naylor J."/>
            <person name="Stange-Thomann N."/>
            <person name="Barrett R."/>
            <person name="Gnerre S."/>
            <person name="Kamal M."/>
            <person name="Kamvysselis M."/>
            <person name="Mauceli E.W."/>
            <person name="Bielke C."/>
            <person name="Rudd S."/>
            <person name="Frishman D."/>
            <person name="Krystofova S."/>
            <person name="Rasmussen C."/>
            <person name="Metzenberg R.L."/>
            <person name="Perkins D.D."/>
            <person name="Kroken S."/>
            <person name="Cogoni C."/>
            <person name="Macino G."/>
            <person name="Catcheside D.E.A."/>
            <person name="Li W."/>
            <person name="Pratt R.J."/>
            <person name="Osmani S.A."/>
            <person name="DeSouza C.P.C."/>
            <person name="Glass N.L."/>
            <person name="Orbach M.J."/>
            <person name="Berglund J.A."/>
            <person name="Voelker R."/>
            <person name="Yarden O."/>
            <person name="Plamann M."/>
            <person name="Seiler S."/>
            <person name="Dunlap J.C."/>
            <person name="Radford A."/>
            <person name="Aramayo R."/>
            <person name="Natvig D.O."/>
            <person name="Alex L.A."/>
            <person name="Mannhaupt G."/>
            <person name="Ebbole D.J."/>
            <person name="Freitag M."/>
            <person name="Paulsen I."/>
            <person name="Sachs M.S."/>
            <person name="Lander E.S."/>
            <person name="Nusbaum C."/>
            <person name="Birren B.W."/>
        </authorList>
    </citation>
    <scope>NUCLEOTIDE SEQUENCE [LARGE SCALE GENOMIC DNA]</scope>
    <source>
        <strain>ATCC 24698 / 74-OR23-1A / CBS 708.71 / DSM 1257 / FGSC 987</strain>
    </source>
</reference>
<comment type="function">
    <text evidence="2">Probable rhomboid-type serine protease that catalyzes intramembrane proteolysis.</text>
</comment>
<comment type="catalytic activity">
    <reaction evidence="2">
        <text>Cleaves type-1 transmembrane domains using a catalytic dyad composed of serine and histidine that are contributed by different transmembrane domains.</text>
        <dbReference type="EC" id="3.4.21.105"/>
    </reaction>
</comment>
<comment type="subcellular location">
    <subcellularLocation>
        <location evidence="1">Golgi apparatus membrane</location>
        <topology evidence="1">Multi-pass membrane protein</topology>
    </subcellularLocation>
    <subcellularLocation>
        <location evidence="1">Golgi apparatus</location>
        <location evidence="1">cis-Golgi network membrane</location>
        <topology evidence="1">Multi-pass membrane protein</topology>
    </subcellularLocation>
</comment>
<comment type="similarity">
    <text evidence="4">Belongs to the peptidase S54 family.</text>
</comment>